<feature type="chain" id="PRO_1000095958" description="Phosphoribosylaminoimidazole-succinocarboxamide synthase">
    <location>
        <begin position="1"/>
        <end position="239"/>
    </location>
</feature>
<keyword id="KW-0067">ATP-binding</keyword>
<keyword id="KW-0436">Ligase</keyword>
<keyword id="KW-0547">Nucleotide-binding</keyword>
<keyword id="KW-0658">Purine biosynthesis</keyword>
<proteinExistence type="inferred from homology"/>
<comment type="catalytic activity">
    <reaction evidence="1">
        <text>5-amino-1-(5-phospho-D-ribosyl)imidazole-4-carboxylate + L-aspartate + ATP = (2S)-2-[5-amino-1-(5-phospho-beta-D-ribosyl)imidazole-4-carboxamido]succinate + ADP + phosphate + 2 H(+)</text>
        <dbReference type="Rhea" id="RHEA:22628"/>
        <dbReference type="ChEBI" id="CHEBI:15378"/>
        <dbReference type="ChEBI" id="CHEBI:29991"/>
        <dbReference type="ChEBI" id="CHEBI:30616"/>
        <dbReference type="ChEBI" id="CHEBI:43474"/>
        <dbReference type="ChEBI" id="CHEBI:58443"/>
        <dbReference type="ChEBI" id="CHEBI:77657"/>
        <dbReference type="ChEBI" id="CHEBI:456216"/>
        <dbReference type="EC" id="6.3.2.6"/>
    </reaction>
</comment>
<comment type="pathway">
    <text evidence="1">Purine metabolism; IMP biosynthesis via de novo pathway; 5-amino-1-(5-phospho-D-ribosyl)imidazole-4-carboxamide from 5-amino-1-(5-phospho-D-ribosyl)imidazole-4-carboxylate: step 1/2.</text>
</comment>
<comment type="similarity">
    <text evidence="1">Belongs to the SAICAR synthetase family.</text>
</comment>
<evidence type="ECO:0000255" key="1">
    <source>
        <dbReference type="HAMAP-Rule" id="MF_00137"/>
    </source>
</evidence>
<protein>
    <recommendedName>
        <fullName evidence="1">Phosphoribosylaminoimidazole-succinocarboxamide synthase</fullName>
        <ecNumber evidence="1">6.3.2.6</ecNumber>
    </recommendedName>
    <alternativeName>
        <fullName evidence="1">SAICAR synthetase</fullName>
    </alternativeName>
</protein>
<accession>B0VPX5</accession>
<sequence length="239" mass="26958">MLKQTLLYTGKAKSVYETDNADHLILVFRDDASAFNGEKIEQLDRKGKVNNRFNAFIMEKLAEAGIETHFEKLLSPTEVLVKKLQMIPVECVIRNYAAGSLCRRLGVEEGKELTPPTFELFYKDDGLGDPMVNESQAIALGWATAEQLEQMKVLTYKVNDVLKALFAEGNMILVDFKLEFGVFHDRIVLGDEFSPDGCRLWDKDTKKKLDKDRFRQGLGGVVEAYEEVAARLGVDLSDI</sequence>
<reference key="1">
    <citation type="journal article" date="2008" name="PLoS ONE">
        <title>Comparative analysis of Acinetobacters: three genomes for three lifestyles.</title>
        <authorList>
            <person name="Vallenet D."/>
            <person name="Nordmann P."/>
            <person name="Barbe V."/>
            <person name="Poirel L."/>
            <person name="Mangenot S."/>
            <person name="Bataille E."/>
            <person name="Dossat C."/>
            <person name="Gas S."/>
            <person name="Kreimeyer A."/>
            <person name="Lenoble P."/>
            <person name="Oztas S."/>
            <person name="Poulain J."/>
            <person name="Segurens B."/>
            <person name="Robert C."/>
            <person name="Abergel C."/>
            <person name="Claverie J.-M."/>
            <person name="Raoult D."/>
            <person name="Medigue C."/>
            <person name="Weissenbach J."/>
            <person name="Cruveiller S."/>
        </authorList>
    </citation>
    <scope>NUCLEOTIDE SEQUENCE [LARGE SCALE GENOMIC DNA]</scope>
    <source>
        <strain>SDF</strain>
    </source>
</reference>
<dbReference type="EC" id="6.3.2.6" evidence="1"/>
<dbReference type="EMBL" id="CU468230">
    <property type="protein sequence ID" value="CAP02866.1"/>
    <property type="molecule type" value="Genomic_DNA"/>
</dbReference>
<dbReference type="SMR" id="B0VPX5"/>
<dbReference type="KEGG" id="abm:ABSDF3608"/>
<dbReference type="HOGENOM" id="CLU_061495_2_0_6"/>
<dbReference type="UniPathway" id="UPA00074">
    <property type="reaction ID" value="UER00131"/>
</dbReference>
<dbReference type="Proteomes" id="UP000001741">
    <property type="component" value="Chromosome"/>
</dbReference>
<dbReference type="GO" id="GO:0005829">
    <property type="term" value="C:cytosol"/>
    <property type="evidence" value="ECO:0007669"/>
    <property type="project" value="TreeGrafter"/>
</dbReference>
<dbReference type="GO" id="GO:0005524">
    <property type="term" value="F:ATP binding"/>
    <property type="evidence" value="ECO:0007669"/>
    <property type="project" value="UniProtKB-KW"/>
</dbReference>
<dbReference type="GO" id="GO:0004639">
    <property type="term" value="F:phosphoribosylaminoimidazolesuccinocarboxamide synthase activity"/>
    <property type="evidence" value="ECO:0007669"/>
    <property type="project" value="UniProtKB-UniRule"/>
</dbReference>
<dbReference type="GO" id="GO:0006189">
    <property type="term" value="P:'de novo' IMP biosynthetic process"/>
    <property type="evidence" value="ECO:0007669"/>
    <property type="project" value="UniProtKB-UniRule"/>
</dbReference>
<dbReference type="GO" id="GO:0009236">
    <property type="term" value="P:cobalamin biosynthetic process"/>
    <property type="evidence" value="ECO:0007669"/>
    <property type="project" value="InterPro"/>
</dbReference>
<dbReference type="CDD" id="cd01415">
    <property type="entry name" value="SAICAR_synt_PurC"/>
    <property type="match status" value="1"/>
</dbReference>
<dbReference type="FunFam" id="3.30.200.20:FF:000086">
    <property type="entry name" value="Phosphoribosylaminoimidazole-succinocarboxamide synthase"/>
    <property type="match status" value="1"/>
</dbReference>
<dbReference type="FunFam" id="3.30.470.20:FF:000006">
    <property type="entry name" value="Phosphoribosylaminoimidazole-succinocarboxamide synthase"/>
    <property type="match status" value="1"/>
</dbReference>
<dbReference type="Gene3D" id="3.30.470.20">
    <property type="entry name" value="ATP-grasp fold, B domain"/>
    <property type="match status" value="1"/>
</dbReference>
<dbReference type="Gene3D" id="3.30.200.20">
    <property type="entry name" value="Phosphorylase Kinase, domain 1"/>
    <property type="match status" value="1"/>
</dbReference>
<dbReference type="HAMAP" id="MF_00137">
    <property type="entry name" value="SAICAR_synth"/>
    <property type="match status" value="1"/>
</dbReference>
<dbReference type="InterPro" id="IPR028923">
    <property type="entry name" value="SAICAR_synt/ADE2_N"/>
</dbReference>
<dbReference type="InterPro" id="IPR033934">
    <property type="entry name" value="SAICAR_synt_PurC"/>
</dbReference>
<dbReference type="InterPro" id="IPR001636">
    <property type="entry name" value="SAICAR_synth"/>
</dbReference>
<dbReference type="InterPro" id="IPR050089">
    <property type="entry name" value="SAICAR_synthetase"/>
</dbReference>
<dbReference type="InterPro" id="IPR018236">
    <property type="entry name" value="SAICAR_synthetase_CS"/>
</dbReference>
<dbReference type="NCBIfam" id="TIGR00081">
    <property type="entry name" value="purC"/>
    <property type="match status" value="1"/>
</dbReference>
<dbReference type="PANTHER" id="PTHR43599">
    <property type="entry name" value="MULTIFUNCTIONAL PROTEIN ADE2"/>
    <property type="match status" value="1"/>
</dbReference>
<dbReference type="PANTHER" id="PTHR43599:SF3">
    <property type="entry name" value="SI:DKEY-6E2.2"/>
    <property type="match status" value="1"/>
</dbReference>
<dbReference type="Pfam" id="PF01259">
    <property type="entry name" value="SAICAR_synt"/>
    <property type="match status" value="1"/>
</dbReference>
<dbReference type="SUPFAM" id="SSF56104">
    <property type="entry name" value="SAICAR synthase-like"/>
    <property type="match status" value="1"/>
</dbReference>
<dbReference type="PROSITE" id="PS01057">
    <property type="entry name" value="SAICAR_SYNTHETASE_1"/>
    <property type="match status" value="1"/>
</dbReference>
<dbReference type="PROSITE" id="PS01058">
    <property type="entry name" value="SAICAR_SYNTHETASE_2"/>
    <property type="match status" value="1"/>
</dbReference>
<gene>
    <name evidence="1" type="primary">purC</name>
    <name type="ordered locus">ABSDF3608</name>
</gene>
<organism>
    <name type="scientific">Acinetobacter baumannii (strain SDF)</name>
    <dbReference type="NCBI Taxonomy" id="509170"/>
    <lineage>
        <taxon>Bacteria</taxon>
        <taxon>Pseudomonadati</taxon>
        <taxon>Pseudomonadota</taxon>
        <taxon>Gammaproteobacteria</taxon>
        <taxon>Moraxellales</taxon>
        <taxon>Moraxellaceae</taxon>
        <taxon>Acinetobacter</taxon>
        <taxon>Acinetobacter calcoaceticus/baumannii complex</taxon>
    </lineage>
</organism>
<name>PUR7_ACIBS</name>